<dbReference type="EC" id="5.3.1.5" evidence="1"/>
<dbReference type="EMBL" id="AP009240">
    <property type="protein sequence ID" value="BAG79363.1"/>
    <property type="molecule type" value="Genomic_DNA"/>
</dbReference>
<dbReference type="RefSeq" id="WP_001149581.1">
    <property type="nucleotide sequence ID" value="NC_011415.1"/>
</dbReference>
<dbReference type="SMR" id="B6I3D6"/>
<dbReference type="GeneID" id="93778299"/>
<dbReference type="KEGG" id="ecy:ECSE_3839"/>
<dbReference type="HOGENOM" id="CLU_037261_1_0_6"/>
<dbReference type="Proteomes" id="UP000008199">
    <property type="component" value="Chromosome"/>
</dbReference>
<dbReference type="GO" id="GO:0005737">
    <property type="term" value="C:cytoplasm"/>
    <property type="evidence" value="ECO:0007669"/>
    <property type="project" value="UniProtKB-SubCell"/>
</dbReference>
<dbReference type="GO" id="GO:0000287">
    <property type="term" value="F:magnesium ion binding"/>
    <property type="evidence" value="ECO:0007669"/>
    <property type="project" value="UniProtKB-UniRule"/>
</dbReference>
<dbReference type="GO" id="GO:0009045">
    <property type="term" value="F:xylose isomerase activity"/>
    <property type="evidence" value="ECO:0007669"/>
    <property type="project" value="UniProtKB-UniRule"/>
</dbReference>
<dbReference type="GO" id="GO:0042732">
    <property type="term" value="P:D-xylose metabolic process"/>
    <property type="evidence" value="ECO:0007669"/>
    <property type="project" value="UniProtKB-UniRule"/>
</dbReference>
<dbReference type="FunFam" id="3.20.20.150:FF:000002">
    <property type="entry name" value="Xylose isomerase"/>
    <property type="match status" value="1"/>
</dbReference>
<dbReference type="Gene3D" id="3.20.20.150">
    <property type="entry name" value="Divalent-metal-dependent TIM barrel enzymes"/>
    <property type="match status" value="1"/>
</dbReference>
<dbReference type="HAMAP" id="MF_00455">
    <property type="entry name" value="Xylose_isom_A"/>
    <property type="match status" value="1"/>
</dbReference>
<dbReference type="InterPro" id="IPR036237">
    <property type="entry name" value="Xyl_isomerase-like_sf"/>
</dbReference>
<dbReference type="InterPro" id="IPR013452">
    <property type="entry name" value="Xylose_isom_bac"/>
</dbReference>
<dbReference type="InterPro" id="IPR001998">
    <property type="entry name" value="Xylose_isomerase"/>
</dbReference>
<dbReference type="NCBIfam" id="NF003998">
    <property type="entry name" value="PRK05474.1"/>
    <property type="match status" value="1"/>
</dbReference>
<dbReference type="NCBIfam" id="TIGR02630">
    <property type="entry name" value="xylose_isom_A"/>
    <property type="match status" value="1"/>
</dbReference>
<dbReference type="PANTHER" id="PTHR48408">
    <property type="match status" value="1"/>
</dbReference>
<dbReference type="PANTHER" id="PTHR48408:SF1">
    <property type="entry name" value="XYLOSE ISOMERASE"/>
    <property type="match status" value="1"/>
</dbReference>
<dbReference type="PRINTS" id="PR00688">
    <property type="entry name" value="XYLOSISMRASE"/>
</dbReference>
<dbReference type="SUPFAM" id="SSF51658">
    <property type="entry name" value="Xylose isomerase-like"/>
    <property type="match status" value="1"/>
</dbReference>
<dbReference type="PROSITE" id="PS51415">
    <property type="entry name" value="XYLOSE_ISOMERASE"/>
    <property type="match status" value="1"/>
</dbReference>
<sequence length="440" mass="49733">MQAYFDQLDRVRYEGSKSSNPLAFRHYNPDELVLGKRMEEHLRFAACYWHTFCWNGADMFGVGAFNRPWQQPGEALALAKRKADVAFEFFHKLHVPFYCFHDVDVSPEGASLKEYINNFAQMVDVLAAKQEESGVKLLWGTANCFTNPRYGAGAATNPDPEVFSWAATQVVTAMEATHKLGGENYVLWGGREGYETLLNTDLRQEREQLGRFMQMVVEHKHKIGFQGTLLIEPKPQEPTKHQYDYDAATVYGFLKQFGLEKEIKLNIEANHATLAGHSFHHEIATAIALGLFGSVDANRGDAQLGWDTDQFPNSVEENALVMYEILKAGGFTTGGLNFDAKVRRQSTDKYDLFYGHIGAMDTMALALKIAARMIEDGELDKRIAQRYSGWNSELGQQILKGQMSLADLAKYAQEHNLSPVHQSGRQEQLENLVNHYLFDK</sequence>
<reference key="1">
    <citation type="journal article" date="2008" name="DNA Res.">
        <title>Complete genome sequence and comparative analysis of the wild-type commensal Escherichia coli strain SE11 isolated from a healthy adult.</title>
        <authorList>
            <person name="Oshima K."/>
            <person name="Toh H."/>
            <person name="Ogura Y."/>
            <person name="Sasamoto H."/>
            <person name="Morita H."/>
            <person name="Park S.-H."/>
            <person name="Ooka T."/>
            <person name="Iyoda S."/>
            <person name="Taylor T.D."/>
            <person name="Hayashi T."/>
            <person name="Itoh K."/>
            <person name="Hattori M."/>
        </authorList>
    </citation>
    <scope>NUCLEOTIDE SEQUENCE [LARGE SCALE GENOMIC DNA]</scope>
    <source>
        <strain>SE11</strain>
    </source>
</reference>
<proteinExistence type="inferred from homology"/>
<evidence type="ECO:0000255" key="1">
    <source>
        <dbReference type="HAMAP-Rule" id="MF_00455"/>
    </source>
</evidence>
<keyword id="KW-0119">Carbohydrate metabolism</keyword>
<keyword id="KW-0963">Cytoplasm</keyword>
<keyword id="KW-0413">Isomerase</keyword>
<keyword id="KW-0460">Magnesium</keyword>
<keyword id="KW-0479">Metal-binding</keyword>
<keyword id="KW-0859">Xylose metabolism</keyword>
<protein>
    <recommendedName>
        <fullName evidence="1">Xylose isomerase</fullName>
        <ecNumber evidence="1">5.3.1.5</ecNumber>
    </recommendedName>
</protein>
<feature type="chain" id="PRO_1000200289" description="Xylose isomerase">
    <location>
        <begin position="1"/>
        <end position="440"/>
    </location>
</feature>
<feature type="active site" evidence="1">
    <location>
        <position position="101"/>
    </location>
</feature>
<feature type="active site" evidence="1">
    <location>
        <position position="104"/>
    </location>
</feature>
<feature type="binding site" evidence="1">
    <location>
        <position position="232"/>
    </location>
    <ligand>
        <name>Mg(2+)</name>
        <dbReference type="ChEBI" id="CHEBI:18420"/>
        <label>1</label>
    </ligand>
</feature>
<feature type="binding site" evidence="1">
    <location>
        <position position="268"/>
    </location>
    <ligand>
        <name>Mg(2+)</name>
        <dbReference type="ChEBI" id="CHEBI:18420"/>
        <label>1</label>
    </ligand>
</feature>
<feature type="binding site" evidence="1">
    <location>
        <position position="268"/>
    </location>
    <ligand>
        <name>Mg(2+)</name>
        <dbReference type="ChEBI" id="CHEBI:18420"/>
        <label>2</label>
    </ligand>
</feature>
<feature type="binding site" evidence="1">
    <location>
        <position position="271"/>
    </location>
    <ligand>
        <name>Mg(2+)</name>
        <dbReference type="ChEBI" id="CHEBI:18420"/>
        <label>2</label>
    </ligand>
</feature>
<feature type="binding site" evidence="1">
    <location>
        <position position="296"/>
    </location>
    <ligand>
        <name>Mg(2+)</name>
        <dbReference type="ChEBI" id="CHEBI:18420"/>
        <label>1</label>
    </ligand>
</feature>
<feature type="binding site" evidence="1">
    <location>
        <position position="307"/>
    </location>
    <ligand>
        <name>Mg(2+)</name>
        <dbReference type="ChEBI" id="CHEBI:18420"/>
        <label>2</label>
    </ligand>
</feature>
<feature type="binding site" evidence="1">
    <location>
        <position position="309"/>
    </location>
    <ligand>
        <name>Mg(2+)</name>
        <dbReference type="ChEBI" id="CHEBI:18420"/>
        <label>2</label>
    </ligand>
</feature>
<feature type="binding site" evidence="1">
    <location>
        <position position="339"/>
    </location>
    <ligand>
        <name>Mg(2+)</name>
        <dbReference type="ChEBI" id="CHEBI:18420"/>
        <label>1</label>
    </ligand>
</feature>
<accession>B6I3D6</accession>
<name>XYLA_ECOSE</name>
<comment type="catalytic activity">
    <reaction evidence="1">
        <text>alpha-D-xylose = alpha-D-xylulofuranose</text>
        <dbReference type="Rhea" id="RHEA:22816"/>
        <dbReference type="ChEBI" id="CHEBI:28518"/>
        <dbReference type="ChEBI" id="CHEBI:188998"/>
        <dbReference type="EC" id="5.3.1.5"/>
    </reaction>
</comment>
<comment type="cofactor">
    <cofactor evidence="1">
        <name>Mg(2+)</name>
        <dbReference type="ChEBI" id="CHEBI:18420"/>
    </cofactor>
    <text evidence="1">Binds 2 magnesium ions per subunit.</text>
</comment>
<comment type="subunit">
    <text evidence="1">Homotetramer.</text>
</comment>
<comment type="subcellular location">
    <subcellularLocation>
        <location evidence="1">Cytoplasm</location>
    </subcellularLocation>
</comment>
<comment type="similarity">
    <text evidence="1">Belongs to the xylose isomerase family.</text>
</comment>
<organism>
    <name type="scientific">Escherichia coli (strain SE11)</name>
    <dbReference type="NCBI Taxonomy" id="409438"/>
    <lineage>
        <taxon>Bacteria</taxon>
        <taxon>Pseudomonadati</taxon>
        <taxon>Pseudomonadota</taxon>
        <taxon>Gammaproteobacteria</taxon>
        <taxon>Enterobacterales</taxon>
        <taxon>Enterobacteriaceae</taxon>
        <taxon>Escherichia</taxon>
    </lineage>
</organism>
<gene>
    <name evidence="1" type="primary">xylA</name>
    <name type="ordered locus">ECSE_3839</name>
</gene>